<organism>
    <name type="scientific">Buchnera aphidicola subsp. Cinara cedri (strain Cc)</name>
    <dbReference type="NCBI Taxonomy" id="372461"/>
    <lineage>
        <taxon>Bacteria</taxon>
        <taxon>Pseudomonadati</taxon>
        <taxon>Pseudomonadota</taxon>
        <taxon>Gammaproteobacteria</taxon>
        <taxon>Enterobacterales</taxon>
        <taxon>Erwiniaceae</taxon>
        <taxon>Buchnera</taxon>
    </lineage>
</organism>
<reference key="1">
    <citation type="journal article" date="2006" name="Science">
        <title>A small microbial genome: the end of a long symbiotic relationship?</title>
        <authorList>
            <person name="Perez-Brocal V."/>
            <person name="Gil R."/>
            <person name="Ramos S."/>
            <person name="Lamelas A."/>
            <person name="Postigo M."/>
            <person name="Michelena J.M."/>
            <person name="Silva F.J."/>
            <person name="Moya A."/>
            <person name="Latorre A."/>
        </authorList>
    </citation>
    <scope>NUCLEOTIDE SEQUENCE [LARGE SCALE GENOMIC DNA]</scope>
    <source>
        <strain>Cc</strain>
    </source>
</reference>
<feature type="chain" id="PRO_1000073413" description="Large ribosomal subunit protein uL13">
    <location>
        <begin position="1"/>
        <end position="142"/>
    </location>
</feature>
<proteinExistence type="inferred from homology"/>
<dbReference type="EMBL" id="CP000263">
    <property type="protein sequence ID" value="ABJ90711.1"/>
    <property type="molecule type" value="Genomic_DNA"/>
</dbReference>
<dbReference type="RefSeq" id="WP_011672630.1">
    <property type="nucleotide sequence ID" value="NC_008513.1"/>
</dbReference>
<dbReference type="SMR" id="Q057I8"/>
<dbReference type="STRING" id="372461.BCc_243"/>
<dbReference type="KEGG" id="bcc:BCc_243"/>
<dbReference type="eggNOG" id="COG0102">
    <property type="taxonomic scope" value="Bacteria"/>
</dbReference>
<dbReference type="HOGENOM" id="CLU_082184_2_2_6"/>
<dbReference type="OrthoDB" id="9801330at2"/>
<dbReference type="Proteomes" id="UP000000669">
    <property type="component" value="Chromosome"/>
</dbReference>
<dbReference type="GO" id="GO:0022625">
    <property type="term" value="C:cytosolic large ribosomal subunit"/>
    <property type="evidence" value="ECO:0007669"/>
    <property type="project" value="TreeGrafter"/>
</dbReference>
<dbReference type="GO" id="GO:0003729">
    <property type="term" value="F:mRNA binding"/>
    <property type="evidence" value="ECO:0007669"/>
    <property type="project" value="TreeGrafter"/>
</dbReference>
<dbReference type="GO" id="GO:0003735">
    <property type="term" value="F:structural constituent of ribosome"/>
    <property type="evidence" value="ECO:0007669"/>
    <property type="project" value="InterPro"/>
</dbReference>
<dbReference type="GO" id="GO:0017148">
    <property type="term" value="P:negative regulation of translation"/>
    <property type="evidence" value="ECO:0007669"/>
    <property type="project" value="TreeGrafter"/>
</dbReference>
<dbReference type="GO" id="GO:0006412">
    <property type="term" value="P:translation"/>
    <property type="evidence" value="ECO:0007669"/>
    <property type="project" value="UniProtKB-UniRule"/>
</dbReference>
<dbReference type="CDD" id="cd00392">
    <property type="entry name" value="Ribosomal_L13"/>
    <property type="match status" value="1"/>
</dbReference>
<dbReference type="FunFam" id="3.90.1180.10:FF:000001">
    <property type="entry name" value="50S ribosomal protein L13"/>
    <property type="match status" value="1"/>
</dbReference>
<dbReference type="Gene3D" id="3.90.1180.10">
    <property type="entry name" value="Ribosomal protein L13"/>
    <property type="match status" value="1"/>
</dbReference>
<dbReference type="HAMAP" id="MF_01366">
    <property type="entry name" value="Ribosomal_uL13"/>
    <property type="match status" value="1"/>
</dbReference>
<dbReference type="InterPro" id="IPR005822">
    <property type="entry name" value="Ribosomal_uL13"/>
</dbReference>
<dbReference type="InterPro" id="IPR005823">
    <property type="entry name" value="Ribosomal_uL13_bac-type"/>
</dbReference>
<dbReference type="InterPro" id="IPR036899">
    <property type="entry name" value="Ribosomal_uL13_sf"/>
</dbReference>
<dbReference type="NCBIfam" id="TIGR01066">
    <property type="entry name" value="rplM_bact"/>
    <property type="match status" value="1"/>
</dbReference>
<dbReference type="PANTHER" id="PTHR11545:SF2">
    <property type="entry name" value="LARGE RIBOSOMAL SUBUNIT PROTEIN UL13M"/>
    <property type="match status" value="1"/>
</dbReference>
<dbReference type="PANTHER" id="PTHR11545">
    <property type="entry name" value="RIBOSOMAL PROTEIN L13"/>
    <property type="match status" value="1"/>
</dbReference>
<dbReference type="Pfam" id="PF00572">
    <property type="entry name" value="Ribosomal_L13"/>
    <property type="match status" value="1"/>
</dbReference>
<dbReference type="PIRSF" id="PIRSF002181">
    <property type="entry name" value="Ribosomal_L13"/>
    <property type="match status" value="1"/>
</dbReference>
<dbReference type="SUPFAM" id="SSF52161">
    <property type="entry name" value="Ribosomal protein L13"/>
    <property type="match status" value="1"/>
</dbReference>
<name>RL13_BUCCC</name>
<protein>
    <recommendedName>
        <fullName evidence="1">Large ribosomal subunit protein uL13</fullName>
    </recommendedName>
    <alternativeName>
        <fullName evidence="2">50S ribosomal protein L13</fullName>
    </alternativeName>
</protein>
<evidence type="ECO:0000255" key="1">
    <source>
        <dbReference type="HAMAP-Rule" id="MF_01366"/>
    </source>
</evidence>
<evidence type="ECO:0000305" key="2"/>
<sequence length="142" mass="16330">MKSFSAKITSIKKNWYCIDATNKILGRLASQVSIFLRGKNKPEFTPHIDVGDYIIIINASKIVVTGNKEKNKFYYHHSGYVGGIKKYTFKYMMLHHPTRIIKKAIKGMLPKGSLGQKIFKKLKVFPFNQHNLISQKPVFLNI</sequence>
<comment type="function">
    <text evidence="1">This protein is one of the early assembly proteins of the 50S ribosomal subunit, although it is not seen to bind rRNA by itself. It is important during the early stages of 50S assembly.</text>
</comment>
<comment type="subunit">
    <text evidence="1">Part of the 50S ribosomal subunit.</text>
</comment>
<comment type="similarity">
    <text evidence="1">Belongs to the universal ribosomal protein uL13 family.</text>
</comment>
<accession>Q057I8</accession>
<gene>
    <name evidence="1" type="primary">rplM</name>
    <name type="ordered locus">BCc_243</name>
</gene>
<keyword id="KW-1185">Reference proteome</keyword>
<keyword id="KW-0687">Ribonucleoprotein</keyword>
<keyword id="KW-0689">Ribosomal protein</keyword>